<feature type="chain" id="PRO_1000046190" description="Large ribosomal subunit protein uL11">
    <location>
        <begin position="1"/>
        <end position="141"/>
    </location>
</feature>
<proteinExistence type="inferred from homology"/>
<evidence type="ECO:0000255" key="1">
    <source>
        <dbReference type="HAMAP-Rule" id="MF_00736"/>
    </source>
</evidence>
<evidence type="ECO:0000305" key="2"/>
<comment type="function">
    <text evidence="1">Forms part of the ribosomal stalk which helps the ribosome interact with GTP-bound translation factors.</text>
</comment>
<comment type="subunit">
    <text evidence="1">Part of the ribosomal stalk of the 50S ribosomal subunit. Interacts with L10 and the large rRNA to form the base of the stalk. L10 forms an elongated spine to which L12 dimers bind in a sequential fashion forming a multimeric L10(L12)X complex.</text>
</comment>
<comment type="PTM">
    <text evidence="1">One or more lysine residues are methylated.</text>
</comment>
<comment type="similarity">
    <text evidence="1">Belongs to the universal ribosomal protein uL11 family.</text>
</comment>
<accession>Q17VN2</accession>
<organism>
    <name type="scientific">Helicobacter acinonychis (strain Sheeba)</name>
    <dbReference type="NCBI Taxonomy" id="382638"/>
    <lineage>
        <taxon>Bacteria</taxon>
        <taxon>Pseudomonadati</taxon>
        <taxon>Campylobacterota</taxon>
        <taxon>Epsilonproteobacteria</taxon>
        <taxon>Campylobacterales</taxon>
        <taxon>Helicobacteraceae</taxon>
        <taxon>Helicobacter</taxon>
    </lineage>
</organism>
<reference key="1">
    <citation type="journal article" date="2006" name="PLoS Genet.">
        <title>Who ate whom? Adaptive Helicobacter genomic changes that accompanied a host jump from early humans to large felines.</title>
        <authorList>
            <person name="Eppinger M."/>
            <person name="Baar C."/>
            <person name="Linz B."/>
            <person name="Raddatz G."/>
            <person name="Lanz C."/>
            <person name="Keller H."/>
            <person name="Morelli G."/>
            <person name="Gressmann H."/>
            <person name="Achtman M."/>
            <person name="Schuster S.C."/>
        </authorList>
    </citation>
    <scope>NUCLEOTIDE SEQUENCE [LARGE SCALE GENOMIC DNA]</scope>
    <source>
        <strain>Sheeba</strain>
    </source>
</reference>
<dbReference type="EMBL" id="AM260522">
    <property type="protein sequence ID" value="CAK00294.1"/>
    <property type="molecule type" value="Genomic_DNA"/>
</dbReference>
<dbReference type="RefSeq" id="WP_011578377.1">
    <property type="nucleotide sequence ID" value="NC_008229.1"/>
</dbReference>
<dbReference type="SMR" id="Q17VN2"/>
<dbReference type="STRING" id="382638.Hac_1582"/>
<dbReference type="GeneID" id="31758834"/>
<dbReference type="KEGG" id="hac:Hac_1582"/>
<dbReference type="eggNOG" id="COG0080">
    <property type="taxonomic scope" value="Bacteria"/>
</dbReference>
<dbReference type="HOGENOM" id="CLU_074237_2_0_7"/>
<dbReference type="OrthoDB" id="9802408at2"/>
<dbReference type="BioCyc" id="HACI382638:HAC_RS06665-MONOMER"/>
<dbReference type="Proteomes" id="UP000000775">
    <property type="component" value="Chromosome"/>
</dbReference>
<dbReference type="GO" id="GO:0022625">
    <property type="term" value="C:cytosolic large ribosomal subunit"/>
    <property type="evidence" value="ECO:0007669"/>
    <property type="project" value="TreeGrafter"/>
</dbReference>
<dbReference type="GO" id="GO:0070180">
    <property type="term" value="F:large ribosomal subunit rRNA binding"/>
    <property type="evidence" value="ECO:0007669"/>
    <property type="project" value="UniProtKB-UniRule"/>
</dbReference>
<dbReference type="GO" id="GO:0003735">
    <property type="term" value="F:structural constituent of ribosome"/>
    <property type="evidence" value="ECO:0007669"/>
    <property type="project" value="InterPro"/>
</dbReference>
<dbReference type="GO" id="GO:0006412">
    <property type="term" value="P:translation"/>
    <property type="evidence" value="ECO:0007669"/>
    <property type="project" value="UniProtKB-UniRule"/>
</dbReference>
<dbReference type="CDD" id="cd00349">
    <property type="entry name" value="Ribosomal_L11"/>
    <property type="match status" value="1"/>
</dbReference>
<dbReference type="FunFam" id="1.10.10.250:FF:000001">
    <property type="entry name" value="50S ribosomal protein L11"/>
    <property type="match status" value="1"/>
</dbReference>
<dbReference type="FunFam" id="3.30.1550.10:FF:000001">
    <property type="entry name" value="50S ribosomal protein L11"/>
    <property type="match status" value="1"/>
</dbReference>
<dbReference type="Gene3D" id="1.10.10.250">
    <property type="entry name" value="Ribosomal protein L11, C-terminal domain"/>
    <property type="match status" value="1"/>
</dbReference>
<dbReference type="Gene3D" id="3.30.1550.10">
    <property type="entry name" value="Ribosomal protein L11/L12, N-terminal domain"/>
    <property type="match status" value="1"/>
</dbReference>
<dbReference type="HAMAP" id="MF_00736">
    <property type="entry name" value="Ribosomal_uL11"/>
    <property type="match status" value="1"/>
</dbReference>
<dbReference type="InterPro" id="IPR000911">
    <property type="entry name" value="Ribosomal_uL11"/>
</dbReference>
<dbReference type="InterPro" id="IPR006519">
    <property type="entry name" value="Ribosomal_uL11_bac-typ"/>
</dbReference>
<dbReference type="InterPro" id="IPR020783">
    <property type="entry name" value="Ribosomal_uL11_C"/>
</dbReference>
<dbReference type="InterPro" id="IPR036769">
    <property type="entry name" value="Ribosomal_uL11_C_sf"/>
</dbReference>
<dbReference type="InterPro" id="IPR020785">
    <property type="entry name" value="Ribosomal_uL11_CS"/>
</dbReference>
<dbReference type="InterPro" id="IPR020784">
    <property type="entry name" value="Ribosomal_uL11_N"/>
</dbReference>
<dbReference type="InterPro" id="IPR036796">
    <property type="entry name" value="Ribosomal_uL11_N_sf"/>
</dbReference>
<dbReference type="NCBIfam" id="TIGR01632">
    <property type="entry name" value="L11_bact"/>
    <property type="match status" value="1"/>
</dbReference>
<dbReference type="PANTHER" id="PTHR11661">
    <property type="entry name" value="60S RIBOSOMAL PROTEIN L12"/>
    <property type="match status" value="1"/>
</dbReference>
<dbReference type="PANTHER" id="PTHR11661:SF1">
    <property type="entry name" value="LARGE RIBOSOMAL SUBUNIT PROTEIN UL11M"/>
    <property type="match status" value="1"/>
</dbReference>
<dbReference type="Pfam" id="PF00298">
    <property type="entry name" value="Ribosomal_L11"/>
    <property type="match status" value="1"/>
</dbReference>
<dbReference type="Pfam" id="PF03946">
    <property type="entry name" value="Ribosomal_L11_N"/>
    <property type="match status" value="1"/>
</dbReference>
<dbReference type="SMART" id="SM00649">
    <property type="entry name" value="RL11"/>
    <property type="match status" value="1"/>
</dbReference>
<dbReference type="SUPFAM" id="SSF54747">
    <property type="entry name" value="Ribosomal L11/L12e N-terminal domain"/>
    <property type="match status" value="1"/>
</dbReference>
<dbReference type="SUPFAM" id="SSF46906">
    <property type="entry name" value="Ribosomal protein L11, C-terminal domain"/>
    <property type="match status" value="1"/>
</dbReference>
<dbReference type="PROSITE" id="PS00359">
    <property type="entry name" value="RIBOSOMAL_L11"/>
    <property type="match status" value="1"/>
</dbReference>
<sequence>MAKKVVGEIKLQIPAGKANPSPPVGPALGQRGVNIMEFCKAFNERTKDMGSFNIPVIITVYQDKSFTFITKKPPVTDLIKKASGVEKGSDNPLKNKVAKLTHKQVEEIAQLKMEDLNTSTMEAAKKIVMGSARSMGVEIVD</sequence>
<protein>
    <recommendedName>
        <fullName evidence="1">Large ribosomal subunit protein uL11</fullName>
    </recommendedName>
    <alternativeName>
        <fullName evidence="2">50S ribosomal protein L11</fullName>
    </alternativeName>
</protein>
<keyword id="KW-0488">Methylation</keyword>
<keyword id="KW-0687">Ribonucleoprotein</keyword>
<keyword id="KW-0689">Ribosomal protein</keyword>
<keyword id="KW-0694">RNA-binding</keyword>
<keyword id="KW-0699">rRNA-binding</keyword>
<gene>
    <name evidence="1" type="primary">rplK</name>
    <name type="ordered locus">Hac_1582</name>
</gene>
<name>RL11_HELAH</name>